<organism>
    <name type="scientific">Herminiimonas arsenicoxydans</name>
    <dbReference type="NCBI Taxonomy" id="204773"/>
    <lineage>
        <taxon>Bacteria</taxon>
        <taxon>Pseudomonadati</taxon>
        <taxon>Pseudomonadota</taxon>
        <taxon>Betaproteobacteria</taxon>
        <taxon>Burkholderiales</taxon>
        <taxon>Oxalobacteraceae</taxon>
        <taxon>Herminiimonas</taxon>
    </lineage>
</organism>
<sequence>MTTPAYKRVLLKLSGEALMGDDPYGINRATIERMVADVSEVSRLGVELAIVIGGGNIFRGVAPGAEGMDRATADYMGMLATVMNSLALADAMRQVGITARVMSAIAIEQVVEPYVRPKALQYLEEGKIVVFAAGTGNPFFTTDTAAALRGAEIGAEIVLKATKVDGVYSADPNKDPDATRYSTITFDEAISKHLQVMDATAFALCRDQKLPIKVFSIVKPGALKRVVMGEDEGTLVHV</sequence>
<keyword id="KW-0067">ATP-binding</keyword>
<keyword id="KW-0963">Cytoplasm</keyword>
<keyword id="KW-0418">Kinase</keyword>
<keyword id="KW-0547">Nucleotide-binding</keyword>
<keyword id="KW-0665">Pyrimidine biosynthesis</keyword>
<keyword id="KW-1185">Reference proteome</keyword>
<keyword id="KW-0808">Transferase</keyword>
<reference key="1">
    <citation type="journal article" date="2007" name="PLoS Genet.">
        <title>A tale of two oxidation states: bacterial colonization of arsenic-rich environments.</title>
        <authorList>
            <person name="Muller D."/>
            <person name="Medigue C."/>
            <person name="Koechler S."/>
            <person name="Barbe V."/>
            <person name="Barakat M."/>
            <person name="Talla E."/>
            <person name="Bonnefoy V."/>
            <person name="Krin E."/>
            <person name="Arsene-Ploetze F."/>
            <person name="Carapito C."/>
            <person name="Chandler M."/>
            <person name="Cournoyer B."/>
            <person name="Cruveiller S."/>
            <person name="Dossat C."/>
            <person name="Duval S."/>
            <person name="Heymann M."/>
            <person name="Leize E."/>
            <person name="Lieutaud A."/>
            <person name="Lievremont D."/>
            <person name="Makita Y."/>
            <person name="Mangenot S."/>
            <person name="Nitschke W."/>
            <person name="Ortet P."/>
            <person name="Perdrial N."/>
            <person name="Schoepp B."/>
            <person name="Siguier P."/>
            <person name="Simeonova D.D."/>
            <person name="Rouy Z."/>
            <person name="Segurens B."/>
            <person name="Turlin E."/>
            <person name="Vallenet D."/>
            <person name="van Dorsselaer A."/>
            <person name="Weiss S."/>
            <person name="Weissenbach J."/>
            <person name="Lett M.-C."/>
            <person name="Danchin A."/>
            <person name="Bertin P.N."/>
        </authorList>
    </citation>
    <scope>NUCLEOTIDE SEQUENCE [LARGE SCALE GENOMIC DNA]</scope>
    <source>
        <strain>ULPAs1</strain>
    </source>
</reference>
<feature type="chain" id="PRO_0000323864" description="Uridylate kinase">
    <location>
        <begin position="1"/>
        <end position="238"/>
    </location>
</feature>
<feature type="binding site" evidence="1">
    <location>
        <begin position="12"/>
        <end position="15"/>
    </location>
    <ligand>
        <name>ATP</name>
        <dbReference type="ChEBI" id="CHEBI:30616"/>
    </ligand>
</feature>
<feature type="binding site" evidence="1">
    <location>
        <position position="54"/>
    </location>
    <ligand>
        <name>UMP</name>
        <dbReference type="ChEBI" id="CHEBI:57865"/>
    </ligand>
</feature>
<feature type="binding site" evidence="1">
    <location>
        <position position="55"/>
    </location>
    <ligand>
        <name>ATP</name>
        <dbReference type="ChEBI" id="CHEBI:30616"/>
    </ligand>
</feature>
<feature type="binding site" evidence="1">
    <location>
        <position position="59"/>
    </location>
    <ligand>
        <name>ATP</name>
        <dbReference type="ChEBI" id="CHEBI:30616"/>
    </ligand>
</feature>
<feature type="binding site" evidence="1">
    <location>
        <position position="74"/>
    </location>
    <ligand>
        <name>UMP</name>
        <dbReference type="ChEBI" id="CHEBI:57865"/>
    </ligand>
</feature>
<feature type="binding site" evidence="1">
    <location>
        <begin position="135"/>
        <end position="142"/>
    </location>
    <ligand>
        <name>UMP</name>
        <dbReference type="ChEBI" id="CHEBI:57865"/>
    </ligand>
</feature>
<feature type="binding site" evidence="1">
    <location>
        <position position="162"/>
    </location>
    <ligand>
        <name>ATP</name>
        <dbReference type="ChEBI" id="CHEBI:30616"/>
    </ligand>
</feature>
<feature type="binding site" evidence="1">
    <location>
        <position position="168"/>
    </location>
    <ligand>
        <name>ATP</name>
        <dbReference type="ChEBI" id="CHEBI:30616"/>
    </ligand>
</feature>
<feature type="binding site" evidence="1">
    <location>
        <position position="171"/>
    </location>
    <ligand>
        <name>ATP</name>
        <dbReference type="ChEBI" id="CHEBI:30616"/>
    </ligand>
</feature>
<dbReference type="EC" id="2.7.4.22" evidence="1"/>
<dbReference type="EMBL" id="CU207211">
    <property type="protein sequence ID" value="CAL61510.1"/>
    <property type="status" value="ALT_INIT"/>
    <property type="molecule type" value="Genomic_DNA"/>
</dbReference>
<dbReference type="SMR" id="A4G4S3"/>
<dbReference type="STRING" id="204773.HEAR1337"/>
<dbReference type="KEGG" id="har:HEAR1337"/>
<dbReference type="eggNOG" id="COG0528">
    <property type="taxonomic scope" value="Bacteria"/>
</dbReference>
<dbReference type="HOGENOM" id="CLU_033861_0_0_4"/>
<dbReference type="OrthoDB" id="9807458at2"/>
<dbReference type="UniPathway" id="UPA00159">
    <property type="reaction ID" value="UER00275"/>
</dbReference>
<dbReference type="Proteomes" id="UP000006697">
    <property type="component" value="Chromosome"/>
</dbReference>
<dbReference type="GO" id="GO:0005829">
    <property type="term" value="C:cytosol"/>
    <property type="evidence" value="ECO:0007669"/>
    <property type="project" value="TreeGrafter"/>
</dbReference>
<dbReference type="GO" id="GO:0005524">
    <property type="term" value="F:ATP binding"/>
    <property type="evidence" value="ECO:0007669"/>
    <property type="project" value="UniProtKB-KW"/>
</dbReference>
<dbReference type="GO" id="GO:0033862">
    <property type="term" value="F:UMP kinase activity"/>
    <property type="evidence" value="ECO:0007669"/>
    <property type="project" value="UniProtKB-EC"/>
</dbReference>
<dbReference type="GO" id="GO:0044210">
    <property type="term" value="P:'de novo' CTP biosynthetic process"/>
    <property type="evidence" value="ECO:0007669"/>
    <property type="project" value="UniProtKB-UniRule"/>
</dbReference>
<dbReference type="GO" id="GO:0006225">
    <property type="term" value="P:UDP biosynthetic process"/>
    <property type="evidence" value="ECO:0007669"/>
    <property type="project" value="TreeGrafter"/>
</dbReference>
<dbReference type="CDD" id="cd04254">
    <property type="entry name" value="AAK_UMPK-PyrH-Ec"/>
    <property type="match status" value="1"/>
</dbReference>
<dbReference type="FunFam" id="3.40.1160.10:FF:000001">
    <property type="entry name" value="Uridylate kinase"/>
    <property type="match status" value="1"/>
</dbReference>
<dbReference type="Gene3D" id="3.40.1160.10">
    <property type="entry name" value="Acetylglutamate kinase-like"/>
    <property type="match status" value="1"/>
</dbReference>
<dbReference type="HAMAP" id="MF_01220_B">
    <property type="entry name" value="PyrH_B"/>
    <property type="match status" value="1"/>
</dbReference>
<dbReference type="InterPro" id="IPR036393">
    <property type="entry name" value="AceGlu_kinase-like_sf"/>
</dbReference>
<dbReference type="InterPro" id="IPR001048">
    <property type="entry name" value="Asp/Glu/Uridylate_kinase"/>
</dbReference>
<dbReference type="InterPro" id="IPR011817">
    <property type="entry name" value="Uridylate_kinase"/>
</dbReference>
<dbReference type="InterPro" id="IPR015963">
    <property type="entry name" value="Uridylate_kinase_bac"/>
</dbReference>
<dbReference type="NCBIfam" id="TIGR02075">
    <property type="entry name" value="pyrH_bact"/>
    <property type="match status" value="1"/>
</dbReference>
<dbReference type="PANTHER" id="PTHR42833">
    <property type="entry name" value="URIDYLATE KINASE"/>
    <property type="match status" value="1"/>
</dbReference>
<dbReference type="PANTHER" id="PTHR42833:SF4">
    <property type="entry name" value="URIDYLATE KINASE PUMPKIN, CHLOROPLASTIC"/>
    <property type="match status" value="1"/>
</dbReference>
<dbReference type="Pfam" id="PF00696">
    <property type="entry name" value="AA_kinase"/>
    <property type="match status" value="1"/>
</dbReference>
<dbReference type="PIRSF" id="PIRSF005650">
    <property type="entry name" value="Uridylate_kin"/>
    <property type="match status" value="1"/>
</dbReference>
<dbReference type="SUPFAM" id="SSF53633">
    <property type="entry name" value="Carbamate kinase-like"/>
    <property type="match status" value="1"/>
</dbReference>
<protein>
    <recommendedName>
        <fullName evidence="1">Uridylate kinase</fullName>
        <shortName evidence="1">UK</shortName>
        <ecNumber evidence="1">2.7.4.22</ecNumber>
    </recommendedName>
    <alternativeName>
        <fullName evidence="1">Uridine monophosphate kinase</fullName>
        <shortName evidence="1">UMP kinase</shortName>
        <shortName evidence="1">UMPK</shortName>
    </alternativeName>
</protein>
<accession>A4G4S3</accession>
<comment type="function">
    <text evidence="1">Catalyzes the reversible phosphorylation of UMP to UDP.</text>
</comment>
<comment type="catalytic activity">
    <reaction evidence="1">
        <text>UMP + ATP = UDP + ADP</text>
        <dbReference type="Rhea" id="RHEA:24400"/>
        <dbReference type="ChEBI" id="CHEBI:30616"/>
        <dbReference type="ChEBI" id="CHEBI:57865"/>
        <dbReference type="ChEBI" id="CHEBI:58223"/>
        <dbReference type="ChEBI" id="CHEBI:456216"/>
        <dbReference type="EC" id="2.7.4.22"/>
    </reaction>
</comment>
<comment type="activity regulation">
    <text evidence="1">Inhibited by UTP.</text>
</comment>
<comment type="pathway">
    <text evidence="1">Pyrimidine metabolism; CTP biosynthesis via de novo pathway; UDP from UMP (UMPK route): step 1/1.</text>
</comment>
<comment type="subunit">
    <text evidence="1">Homohexamer.</text>
</comment>
<comment type="subcellular location">
    <subcellularLocation>
        <location evidence="1">Cytoplasm</location>
    </subcellularLocation>
</comment>
<comment type="similarity">
    <text evidence="1">Belongs to the UMP kinase family.</text>
</comment>
<comment type="sequence caution" evidence="2">
    <conflict type="erroneous initiation">
        <sequence resource="EMBL-CDS" id="CAL61510"/>
    </conflict>
</comment>
<evidence type="ECO:0000255" key="1">
    <source>
        <dbReference type="HAMAP-Rule" id="MF_01220"/>
    </source>
</evidence>
<evidence type="ECO:0000305" key="2"/>
<gene>
    <name evidence="1" type="primary">pyrH</name>
    <name type="ordered locus">HEAR1337</name>
</gene>
<proteinExistence type="inferred from homology"/>
<name>PYRH_HERAR</name>